<gene>
    <name evidence="1" type="primary">murA2</name>
    <name type="synonym">murZ</name>
    <name type="ordered locus">SACOL2116</name>
</gene>
<feature type="chain" id="PRO_0000178915" description="UDP-N-acetylglucosamine 1-carboxyvinyltransferase 2">
    <location>
        <begin position="1"/>
        <end position="419"/>
    </location>
</feature>
<feature type="active site" description="Proton donor" evidence="1">
    <location>
        <position position="118"/>
    </location>
</feature>
<feature type="binding site" evidence="1">
    <location>
        <begin position="24"/>
        <end position="25"/>
    </location>
    <ligand>
        <name>phosphoenolpyruvate</name>
        <dbReference type="ChEBI" id="CHEBI:58702"/>
    </ligand>
</feature>
<feature type="binding site" evidence="1">
    <location>
        <position position="94"/>
    </location>
    <ligand>
        <name>UDP-N-acetyl-alpha-D-glucosamine</name>
        <dbReference type="ChEBI" id="CHEBI:57705"/>
    </ligand>
</feature>
<feature type="binding site" evidence="1">
    <location>
        <begin position="123"/>
        <end position="127"/>
    </location>
    <ligand>
        <name>UDP-N-acetyl-alpha-D-glucosamine</name>
        <dbReference type="ChEBI" id="CHEBI:57705"/>
    </ligand>
</feature>
<feature type="binding site" evidence="1">
    <location>
        <position position="307"/>
    </location>
    <ligand>
        <name>UDP-N-acetyl-alpha-D-glucosamine</name>
        <dbReference type="ChEBI" id="CHEBI:57705"/>
    </ligand>
</feature>
<feature type="binding site" evidence="1">
    <location>
        <position position="329"/>
    </location>
    <ligand>
        <name>UDP-N-acetyl-alpha-D-glucosamine</name>
        <dbReference type="ChEBI" id="CHEBI:57705"/>
    </ligand>
</feature>
<feature type="modified residue" description="2-(S-cysteinyl)pyruvic acid O-phosphothioketal" evidence="1">
    <location>
        <position position="118"/>
    </location>
</feature>
<proteinExistence type="inferred from homology"/>
<protein>
    <recommendedName>
        <fullName evidence="1">UDP-N-acetylglucosamine 1-carboxyvinyltransferase 2</fullName>
        <ecNumber evidence="1">2.5.1.7</ecNumber>
    </recommendedName>
    <alternativeName>
        <fullName evidence="1">Enoylpyruvate transferase 2</fullName>
    </alternativeName>
    <alternativeName>
        <fullName evidence="1">UDP-N-acetylglucosamine enolpyruvyl transferase 2</fullName>
        <shortName evidence="1">EPT 2</shortName>
    </alternativeName>
</protein>
<dbReference type="EC" id="2.5.1.7" evidence="1"/>
<dbReference type="EMBL" id="CP000046">
    <property type="protein sequence ID" value="AAW38426.1"/>
    <property type="molecule type" value="Genomic_DNA"/>
</dbReference>
<dbReference type="RefSeq" id="WP_000046602.1">
    <property type="nucleotide sequence ID" value="NZ_JBGOFO010000007.1"/>
</dbReference>
<dbReference type="SMR" id="Q5HE76"/>
<dbReference type="KEGG" id="sac:SACOL2116"/>
<dbReference type="HOGENOM" id="CLU_027387_0_0_9"/>
<dbReference type="UniPathway" id="UPA00219"/>
<dbReference type="Proteomes" id="UP000000530">
    <property type="component" value="Chromosome"/>
</dbReference>
<dbReference type="GO" id="GO:0005737">
    <property type="term" value="C:cytoplasm"/>
    <property type="evidence" value="ECO:0007669"/>
    <property type="project" value="UniProtKB-SubCell"/>
</dbReference>
<dbReference type="GO" id="GO:0008760">
    <property type="term" value="F:UDP-N-acetylglucosamine 1-carboxyvinyltransferase activity"/>
    <property type="evidence" value="ECO:0007669"/>
    <property type="project" value="UniProtKB-UniRule"/>
</dbReference>
<dbReference type="GO" id="GO:0051301">
    <property type="term" value="P:cell division"/>
    <property type="evidence" value="ECO:0007669"/>
    <property type="project" value="UniProtKB-KW"/>
</dbReference>
<dbReference type="GO" id="GO:0071555">
    <property type="term" value="P:cell wall organization"/>
    <property type="evidence" value="ECO:0007669"/>
    <property type="project" value="UniProtKB-KW"/>
</dbReference>
<dbReference type="GO" id="GO:0009252">
    <property type="term" value="P:peptidoglycan biosynthetic process"/>
    <property type="evidence" value="ECO:0007669"/>
    <property type="project" value="UniProtKB-UniRule"/>
</dbReference>
<dbReference type="GO" id="GO:0008360">
    <property type="term" value="P:regulation of cell shape"/>
    <property type="evidence" value="ECO:0007669"/>
    <property type="project" value="UniProtKB-KW"/>
</dbReference>
<dbReference type="GO" id="GO:0019277">
    <property type="term" value="P:UDP-N-acetylgalactosamine biosynthetic process"/>
    <property type="evidence" value="ECO:0007669"/>
    <property type="project" value="InterPro"/>
</dbReference>
<dbReference type="CDD" id="cd01555">
    <property type="entry name" value="UdpNAET"/>
    <property type="match status" value="1"/>
</dbReference>
<dbReference type="FunFam" id="3.65.10.10:FF:000001">
    <property type="entry name" value="UDP-N-acetylglucosamine 1-carboxyvinyltransferase"/>
    <property type="match status" value="1"/>
</dbReference>
<dbReference type="Gene3D" id="3.65.10.10">
    <property type="entry name" value="Enolpyruvate transferase domain"/>
    <property type="match status" value="2"/>
</dbReference>
<dbReference type="HAMAP" id="MF_00111">
    <property type="entry name" value="MurA"/>
    <property type="match status" value="1"/>
</dbReference>
<dbReference type="InterPro" id="IPR001986">
    <property type="entry name" value="Enolpyruvate_Tfrase_dom"/>
</dbReference>
<dbReference type="InterPro" id="IPR036968">
    <property type="entry name" value="Enolpyruvate_Tfrase_sf"/>
</dbReference>
<dbReference type="InterPro" id="IPR050068">
    <property type="entry name" value="MurA_subfamily"/>
</dbReference>
<dbReference type="InterPro" id="IPR013792">
    <property type="entry name" value="RNA3'P_cycl/enolpyr_Trfase_a/b"/>
</dbReference>
<dbReference type="InterPro" id="IPR005750">
    <property type="entry name" value="UDP_GlcNAc_COvinyl_MurA"/>
</dbReference>
<dbReference type="NCBIfam" id="TIGR01072">
    <property type="entry name" value="murA"/>
    <property type="match status" value="1"/>
</dbReference>
<dbReference type="NCBIfam" id="NF006873">
    <property type="entry name" value="PRK09369.1"/>
    <property type="match status" value="1"/>
</dbReference>
<dbReference type="NCBIfam" id="NF009470">
    <property type="entry name" value="PRK12830.1"/>
    <property type="match status" value="1"/>
</dbReference>
<dbReference type="PANTHER" id="PTHR43783">
    <property type="entry name" value="UDP-N-ACETYLGLUCOSAMINE 1-CARBOXYVINYLTRANSFERASE"/>
    <property type="match status" value="1"/>
</dbReference>
<dbReference type="PANTHER" id="PTHR43783:SF2">
    <property type="entry name" value="UDP-N-ACETYLGLUCOSAMINE 1-CARBOXYVINYLTRANSFERASE 2"/>
    <property type="match status" value="1"/>
</dbReference>
<dbReference type="Pfam" id="PF00275">
    <property type="entry name" value="EPSP_synthase"/>
    <property type="match status" value="1"/>
</dbReference>
<dbReference type="SUPFAM" id="SSF55205">
    <property type="entry name" value="EPT/RTPC-like"/>
    <property type="match status" value="1"/>
</dbReference>
<evidence type="ECO:0000255" key="1">
    <source>
        <dbReference type="HAMAP-Rule" id="MF_00111"/>
    </source>
</evidence>
<name>MURA2_STAAC</name>
<comment type="function">
    <text evidence="1">Cell wall formation. Adds enolpyruvyl to UDP-N-acetylglucosamine.</text>
</comment>
<comment type="catalytic activity">
    <reaction evidence="1">
        <text>phosphoenolpyruvate + UDP-N-acetyl-alpha-D-glucosamine = UDP-N-acetyl-3-O-(1-carboxyvinyl)-alpha-D-glucosamine + phosphate</text>
        <dbReference type="Rhea" id="RHEA:18681"/>
        <dbReference type="ChEBI" id="CHEBI:43474"/>
        <dbReference type="ChEBI" id="CHEBI:57705"/>
        <dbReference type="ChEBI" id="CHEBI:58702"/>
        <dbReference type="ChEBI" id="CHEBI:68483"/>
        <dbReference type="EC" id="2.5.1.7"/>
    </reaction>
</comment>
<comment type="pathway">
    <text evidence="1">Cell wall biogenesis; peptidoglycan biosynthesis.</text>
</comment>
<comment type="subcellular location">
    <subcellularLocation>
        <location evidence="1">Cytoplasm</location>
    </subcellularLocation>
</comment>
<comment type="similarity">
    <text evidence="1">Belongs to the EPSP synthase family. MurA subfamily.</text>
</comment>
<sequence>MAQEVIKIRGGRTLNGEVNISGAKNSAVAIIPATLLAQGHVKLEGLPQISDVKTLVSLLEDLNIKASLNGTELEVDTTEIQNAALPNNKVESLRASYYMMGAMLGRFKKCVIGLPGGCPLGPRPIDQHIKGFKALGAEIDESSTTSMKIEAKELKGAHIFLDMVSVGATINIMLAAVYATGQTVIENAAKEPEVVDVANFLTSMGANIKGAGTSTIKINGVKELHGSEYQVIPDRIEAGTYMCIAAACGENVILNNIVPKHVETLTAKFSELGVNVDVRDERIRINNNAPYQFVDIKTLVYPGFATDLQQPITPLLFMANGPSFVTDTIYPERFKHVEELKRMGANIEVDEGTATIKPSTLHGAEVYASDLRAGACLIIAGLIAEGVTTIYNVKHIYRGYTDIVEHLKALGADIWTETV</sequence>
<organism>
    <name type="scientific">Staphylococcus aureus (strain COL)</name>
    <dbReference type="NCBI Taxonomy" id="93062"/>
    <lineage>
        <taxon>Bacteria</taxon>
        <taxon>Bacillati</taxon>
        <taxon>Bacillota</taxon>
        <taxon>Bacilli</taxon>
        <taxon>Bacillales</taxon>
        <taxon>Staphylococcaceae</taxon>
        <taxon>Staphylococcus</taxon>
    </lineage>
</organism>
<keyword id="KW-0131">Cell cycle</keyword>
<keyword id="KW-0132">Cell division</keyword>
<keyword id="KW-0133">Cell shape</keyword>
<keyword id="KW-0961">Cell wall biogenesis/degradation</keyword>
<keyword id="KW-0963">Cytoplasm</keyword>
<keyword id="KW-0573">Peptidoglycan synthesis</keyword>
<keyword id="KW-0670">Pyruvate</keyword>
<keyword id="KW-0808">Transferase</keyword>
<accession>Q5HE76</accession>
<reference key="1">
    <citation type="journal article" date="2005" name="J. Bacteriol.">
        <title>Insights on evolution of virulence and resistance from the complete genome analysis of an early methicillin-resistant Staphylococcus aureus strain and a biofilm-producing methicillin-resistant Staphylococcus epidermidis strain.</title>
        <authorList>
            <person name="Gill S.R."/>
            <person name="Fouts D.E."/>
            <person name="Archer G.L."/>
            <person name="Mongodin E.F."/>
            <person name="DeBoy R.T."/>
            <person name="Ravel J."/>
            <person name="Paulsen I.T."/>
            <person name="Kolonay J.F."/>
            <person name="Brinkac L.M."/>
            <person name="Beanan M.J."/>
            <person name="Dodson R.J."/>
            <person name="Daugherty S.C."/>
            <person name="Madupu R."/>
            <person name="Angiuoli S.V."/>
            <person name="Durkin A.S."/>
            <person name="Haft D.H."/>
            <person name="Vamathevan J.J."/>
            <person name="Khouri H."/>
            <person name="Utterback T.R."/>
            <person name="Lee C."/>
            <person name="Dimitrov G."/>
            <person name="Jiang L."/>
            <person name="Qin H."/>
            <person name="Weidman J."/>
            <person name="Tran K."/>
            <person name="Kang K.H."/>
            <person name="Hance I.R."/>
            <person name="Nelson K.E."/>
            <person name="Fraser C.M."/>
        </authorList>
    </citation>
    <scope>NUCLEOTIDE SEQUENCE [LARGE SCALE GENOMIC DNA]</scope>
    <source>
        <strain>COL</strain>
    </source>
</reference>